<reference key="1">
    <citation type="journal article" date="2006" name="Proc. Natl. Acad. Sci. U.S.A.">
        <title>Molecular genetic anatomy of inter- and intraserotype variation in the human bacterial pathogen group A Streptococcus.</title>
        <authorList>
            <person name="Beres S.B."/>
            <person name="Richter E.W."/>
            <person name="Nagiec M.J."/>
            <person name="Sumby P."/>
            <person name="Porcella S.F."/>
            <person name="DeLeo F.R."/>
            <person name="Musser J.M."/>
        </authorList>
    </citation>
    <scope>NUCLEOTIDE SEQUENCE [LARGE SCALE GENOMIC DNA]</scope>
    <source>
        <strain>MGAS9429</strain>
    </source>
</reference>
<comment type="function">
    <text evidence="1">Forms part of the ribosomal stalk which helps the ribosome interact with GTP-bound translation factors.</text>
</comment>
<comment type="subunit">
    <text evidence="1">Part of the ribosomal stalk of the 50S ribosomal subunit. Interacts with L10 and the large rRNA to form the base of the stalk. L10 forms an elongated spine to which L12 dimers bind in a sequential fashion forming a multimeric L10(L12)X complex.</text>
</comment>
<comment type="PTM">
    <text evidence="1">One or more lysine residues are methylated.</text>
</comment>
<comment type="similarity">
    <text evidence="1">Belongs to the universal ribosomal protein uL11 family.</text>
</comment>
<comment type="sequence caution" evidence="2">
    <conflict type="erroneous initiation">
        <sequence resource="EMBL-CDS" id="ABF31565"/>
    </conflict>
</comment>
<protein>
    <recommendedName>
        <fullName evidence="1">Large ribosomal subunit protein uL11</fullName>
    </recommendedName>
    <alternativeName>
        <fullName evidence="2">50S ribosomal protein L11</fullName>
    </alternativeName>
</protein>
<accession>Q1JN34</accession>
<gene>
    <name evidence="1" type="primary">rplK</name>
    <name type="ordered locus">MGAS9429_Spy0377</name>
</gene>
<sequence length="141" mass="14801">MAKKVEKLVKLQIPAGKATPAPPVGPALGQAGINIMGFTKEFNARTADQAGMIIPVVISVYEDKSFDFITKTPPAAVLLKKAAGVEKGSGTPNTTKVATVTRAQVQEIAETKMPDLNAANIEAAMRMIEGTARSMGFTVTD</sequence>
<name>RL11_STRPC</name>
<dbReference type="EMBL" id="CP000259">
    <property type="protein sequence ID" value="ABF31565.1"/>
    <property type="status" value="ALT_INIT"/>
    <property type="molecule type" value="Genomic_DNA"/>
</dbReference>
<dbReference type="RefSeq" id="WP_002990800.1">
    <property type="nucleotide sequence ID" value="NC_008021.1"/>
</dbReference>
<dbReference type="SMR" id="Q1JN34"/>
<dbReference type="GeneID" id="69901302"/>
<dbReference type="KEGG" id="spk:MGAS9429_Spy0377"/>
<dbReference type="HOGENOM" id="CLU_074237_2_1_9"/>
<dbReference type="Proteomes" id="UP000002433">
    <property type="component" value="Chromosome"/>
</dbReference>
<dbReference type="GO" id="GO:0022625">
    <property type="term" value="C:cytosolic large ribosomal subunit"/>
    <property type="evidence" value="ECO:0007669"/>
    <property type="project" value="TreeGrafter"/>
</dbReference>
<dbReference type="GO" id="GO:0070180">
    <property type="term" value="F:large ribosomal subunit rRNA binding"/>
    <property type="evidence" value="ECO:0007669"/>
    <property type="project" value="UniProtKB-UniRule"/>
</dbReference>
<dbReference type="GO" id="GO:0003735">
    <property type="term" value="F:structural constituent of ribosome"/>
    <property type="evidence" value="ECO:0007669"/>
    <property type="project" value="InterPro"/>
</dbReference>
<dbReference type="GO" id="GO:0006412">
    <property type="term" value="P:translation"/>
    <property type="evidence" value="ECO:0007669"/>
    <property type="project" value="UniProtKB-UniRule"/>
</dbReference>
<dbReference type="CDD" id="cd00349">
    <property type="entry name" value="Ribosomal_L11"/>
    <property type="match status" value="1"/>
</dbReference>
<dbReference type="FunFam" id="1.10.10.250:FF:000001">
    <property type="entry name" value="50S ribosomal protein L11"/>
    <property type="match status" value="1"/>
</dbReference>
<dbReference type="FunFam" id="3.30.1550.10:FF:000001">
    <property type="entry name" value="50S ribosomal protein L11"/>
    <property type="match status" value="1"/>
</dbReference>
<dbReference type="Gene3D" id="1.10.10.250">
    <property type="entry name" value="Ribosomal protein L11, C-terminal domain"/>
    <property type="match status" value="1"/>
</dbReference>
<dbReference type="Gene3D" id="3.30.1550.10">
    <property type="entry name" value="Ribosomal protein L11/L12, N-terminal domain"/>
    <property type="match status" value="1"/>
</dbReference>
<dbReference type="HAMAP" id="MF_00736">
    <property type="entry name" value="Ribosomal_uL11"/>
    <property type="match status" value="1"/>
</dbReference>
<dbReference type="InterPro" id="IPR000911">
    <property type="entry name" value="Ribosomal_uL11"/>
</dbReference>
<dbReference type="InterPro" id="IPR006519">
    <property type="entry name" value="Ribosomal_uL11_bac-typ"/>
</dbReference>
<dbReference type="InterPro" id="IPR020783">
    <property type="entry name" value="Ribosomal_uL11_C"/>
</dbReference>
<dbReference type="InterPro" id="IPR036769">
    <property type="entry name" value="Ribosomal_uL11_C_sf"/>
</dbReference>
<dbReference type="InterPro" id="IPR020785">
    <property type="entry name" value="Ribosomal_uL11_CS"/>
</dbReference>
<dbReference type="InterPro" id="IPR020784">
    <property type="entry name" value="Ribosomal_uL11_N"/>
</dbReference>
<dbReference type="InterPro" id="IPR036796">
    <property type="entry name" value="Ribosomal_uL11_N_sf"/>
</dbReference>
<dbReference type="NCBIfam" id="TIGR01632">
    <property type="entry name" value="L11_bact"/>
    <property type="match status" value="1"/>
</dbReference>
<dbReference type="PANTHER" id="PTHR11661">
    <property type="entry name" value="60S RIBOSOMAL PROTEIN L12"/>
    <property type="match status" value="1"/>
</dbReference>
<dbReference type="PANTHER" id="PTHR11661:SF1">
    <property type="entry name" value="LARGE RIBOSOMAL SUBUNIT PROTEIN UL11M"/>
    <property type="match status" value="1"/>
</dbReference>
<dbReference type="Pfam" id="PF00298">
    <property type="entry name" value="Ribosomal_L11"/>
    <property type="match status" value="1"/>
</dbReference>
<dbReference type="Pfam" id="PF03946">
    <property type="entry name" value="Ribosomal_L11_N"/>
    <property type="match status" value="1"/>
</dbReference>
<dbReference type="SMART" id="SM00649">
    <property type="entry name" value="RL11"/>
    <property type="match status" value="1"/>
</dbReference>
<dbReference type="SUPFAM" id="SSF54747">
    <property type="entry name" value="Ribosomal L11/L12e N-terminal domain"/>
    <property type="match status" value="1"/>
</dbReference>
<dbReference type="SUPFAM" id="SSF46906">
    <property type="entry name" value="Ribosomal protein L11, C-terminal domain"/>
    <property type="match status" value="1"/>
</dbReference>
<dbReference type="PROSITE" id="PS00359">
    <property type="entry name" value="RIBOSOMAL_L11"/>
    <property type="match status" value="1"/>
</dbReference>
<proteinExistence type="inferred from homology"/>
<feature type="chain" id="PRO_0000258222" description="Large ribosomal subunit protein uL11">
    <location>
        <begin position="1"/>
        <end position="141"/>
    </location>
</feature>
<keyword id="KW-0488">Methylation</keyword>
<keyword id="KW-0687">Ribonucleoprotein</keyword>
<keyword id="KW-0689">Ribosomal protein</keyword>
<keyword id="KW-0694">RNA-binding</keyword>
<keyword id="KW-0699">rRNA-binding</keyword>
<evidence type="ECO:0000255" key="1">
    <source>
        <dbReference type="HAMAP-Rule" id="MF_00736"/>
    </source>
</evidence>
<evidence type="ECO:0000305" key="2"/>
<organism>
    <name type="scientific">Streptococcus pyogenes serotype M12 (strain MGAS9429)</name>
    <dbReference type="NCBI Taxonomy" id="370551"/>
    <lineage>
        <taxon>Bacteria</taxon>
        <taxon>Bacillati</taxon>
        <taxon>Bacillota</taxon>
        <taxon>Bacilli</taxon>
        <taxon>Lactobacillales</taxon>
        <taxon>Streptococcaceae</taxon>
        <taxon>Streptococcus</taxon>
    </lineage>
</organism>